<sequence>MNLIQELEKEQLDKLATGKTIPDFGPGDTVTVNVKVKEGDRTRVQAYEGVCIGRNGGGINESFTVRKISYGEGVERVFPIYSPMIDSIKLVRRGKVRRAKLYYLRGRRGKSARIVEKQDQRQTTTAAAAAE</sequence>
<keyword id="KW-1185">Reference proteome</keyword>
<keyword id="KW-0687">Ribonucleoprotein</keyword>
<keyword id="KW-0689">Ribosomal protein</keyword>
<organism>
    <name type="scientific">Afipia carboxidovorans (strain ATCC 49405 / DSM 1227 / KCTC 32145 / OM5)</name>
    <name type="common">Oligotropha carboxidovorans</name>
    <dbReference type="NCBI Taxonomy" id="504832"/>
    <lineage>
        <taxon>Bacteria</taxon>
        <taxon>Pseudomonadati</taxon>
        <taxon>Pseudomonadota</taxon>
        <taxon>Alphaproteobacteria</taxon>
        <taxon>Hyphomicrobiales</taxon>
        <taxon>Nitrobacteraceae</taxon>
        <taxon>Afipia</taxon>
    </lineage>
</organism>
<feature type="chain" id="PRO_1000123349" description="Large ribosomal subunit protein bL19">
    <location>
        <begin position="1"/>
        <end position="131"/>
    </location>
</feature>
<accession>B6JAQ7</accession>
<accession>F8BTD2</accession>
<dbReference type="EMBL" id="CP001196">
    <property type="protein sequence ID" value="ACI91420.1"/>
    <property type="molecule type" value="Genomic_DNA"/>
</dbReference>
<dbReference type="EMBL" id="CP002826">
    <property type="protein sequence ID" value="AEI04977.1"/>
    <property type="molecule type" value="Genomic_DNA"/>
</dbReference>
<dbReference type="RefSeq" id="WP_012561451.1">
    <property type="nucleotide sequence ID" value="NC_015684.1"/>
</dbReference>
<dbReference type="SMR" id="B6JAQ7"/>
<dbReference type="STRING" id="504832.OCA5_c02480"/>
<dbReference type="KEGG" id="oca:OCAR_4271"/>
<dbReference type="KEGG" id="ocg:OCA5_c02480"/>
<dbReference type="PATRIC" id="fig|504832.7.peg.263"/>
<dbReference type="eggNOG" id="COG0335">
    <property type="taxonomic scope" value="Bacteria"/>
</dbReference>
<dbReference type="HOGENOM" id="CLU_103507_2_2_5"/>
<dbReference type="OrthoDB" id="9803541at2"/>
<dbReference type="Proteomes" id="UP000007730">
    <property type="component" value="Chromosome"/>
</dbReference>
<dbReference type="GO" id="GO:0022625">
    <property type="term" value="C:cytosolic large ribosomal subunit"/>
    <property type="evidence" value="ECO:0007669"/>
    <property type="project" value="TreeGrafter"/>
</dbReference>
<dbReference type="GO" id="GO:0003735">
    <property type="term" value="F:structural constituent of ribosome"/>
    <property type="evidence" value="ECO:0007669"/>
    <property type="project" value="InterPro"/>
</dbReference>
<dbReference type="GO" id="GO:0006412">
    <property type="term" value="P:translation"/>
    <property type="evidence" value="ECO:0007669"/>
    <property type="project" value="UniProtKB-UniRule"/>
</dbReference>
<dbReference type="FunFam" id="2.30.30.790:FF:000001">
    <property type="entry name" value="50S ribosomal protein L19"/>
    <property type="match status" value="1"/>
</dbReference>
<dbReference type="Gene3D" id="2.30.30.790">
    <property type="match status" value="1"/>
</dbReference>
<dbReference type="HAMAP" id="MF_00402">
    <property type="entry name" value="Ribosomal_bL19"/>
    <property type="match status" value="1"/>
</dbReference>
<dbReference type="InterPro" id="IPR001857">
    <property type="entry name" value="Ribosomal_bL19"/>
</dbReference>
<dbReference type="InterPro" id="IPR018257">
    <property type="entry name" value="Ribosomal_bL19_CS"/>
</dbReference>
<dbReference type="InterPro" id="IPR038657">
    <property type="entry name" value="Ribosomal_bL19_sf"/>
</dbReference>
<dbReference type="InterPro" id="IPR008991">
    <property type="entry name" value="Translation_prot_SH3-like_sf"/>
</dbReference>
<dbReference type="NCBIfam" id="TIGR01024">
    <property type="entry name" value="rplS_bact"/>
    <property type="match status" value="1"/>
</dbReference>
<dbReference type="PANTHER" id="PTHR15680:SF9">
    <property type="entry name" value="LARGE RIBOSOMAL SUBUNIT PROTEIN BL19M"/>
    <property type="match status" value="1"/>
</dbReference>
<dbReference type="PANTHER" id="PTHR15680">
    <property type="entry name" value="RIBOSOMAL PROTEIN L19"/>
    <property type="match status" value="1"/>
</dbReference>
<dbReference type="Pfam" id="PF01245">
    <property type="entry name" value="Ribosomal_L19"/>
    <property type="match status" value="1"/>
</dbReference>
<dbReference type="PIRSF" id="PIRSF002191">
    <property type="entry name" value="Ribosomal_L19"/>
    <property type="match status" value="1"/>
</dbReference>
<dbReference type="PRINTS" id="PR00061">
    <property type="entry name" value="RIBOSOMALL19"/>
</dbReference>
<dbReference type="SUPFAM" id="SSF50104">
    <property type="entry name" value="Translation proteins SH3-like domain"/>
    <property type="match status" value="1"/>
</dbReference>
<dbReference type="PROSITE" id="PS01015">
    <property type="entry name" value="RIBOSOMAL_L19"/>
    <property type="match status" value="1"/>
</dbReference>
<evidence type="ECO:0000255" key="1">
    <source>
        <dbReference type="HAMAP-Rule" id="MF_00402"/>
    </source>
</evidence>
<evidence type="ECO:0000305" key="2"/>
<comment type="function">
    <text evidence="1">This protein is located at the 30S-50S ribosomal subunit interface and may play a role in the structure and function of the aminoacyl-tRNA binding site.</text>
</comment>
<comment type="similarity">
    <text evidence="1">Belongs to the bacterial ribosomal protein bL19 family.</text>
</comment>
<proteinExistence type="inferred from homology"/>
<name>RL19_AFIC5</name>
<gene>
    <name evidence="1" type="primary">rplS</name>
    <name type="ordered locus">OCAR_4271</name>
    <name type="ordered locus">OCA5_c02480</name>
</gene>
<reference key="1">
    <citation type="journal article" date="2008" name="J. Bacteriol.">
        <title>Genome sequence of the chemolithoautotrophic bacterium Oligotropha carboxidovorans OM5T.</title>
        <authorList>
            <person name="Paul D."/>
            <person name="Bridges S."/>
            <person name="Burgess S.C."/>
            <person name="Dandass Y."/>
            <person name="Lawrence M.L."/>
        </authorList>
    </citation>
    <scope>NUCLEOTIDE SEQUENCE [LARGE SCALE GENOMIC DNA]</scope>
    <source>
        <strain>ATCC 49405 / DSM 1227 / KCTC 32145 / OM5</strain>
    </source>
</reference>
<reference key="2">
    <citation type="journal article" date="2011" name="J. Bacteriol.">
        <title>Complete genome sequences of the chemolithoautotrophic Oligotropha carboxidovorans strains OM4 and OM5.</title>
        <authorList>
            <person name="Volland S."/>
            <person name="Rachinger M."/>
            <person name="Strittmatter A."/>
            <person name="Daniel R."/>
            <person name="Gottschalk G."/>
            <person name="Meyer O."/>
        </authorList>
    </citation>
    <scope>NUCLEOTIDE SEQUENCE [LARGE SCALE GENOMIC DNA]</scope>
    <source>
        <strain>ATCC 49405 / DSM 1227 / KCTC 32145 / OM5</strain>
    </source>
</reference>
<protein>
    <recommendedName>
        <fullName evidence="1">Large ribosomal subunit protein bL19</fullName>
    </recommendedName>
    <alternativeName>
        <fullName evidence="2">50S ribosomal protein L19</fullName>
    </alternativeName>
</protein>